<protein>
    <recommendedName>
        <fullName>Cytochrome b</fullName>
    </recommendedName>
    <alternativeName>
        <fullName>Complex III subunit 3</fullName>
    </alternativeName>
    <alternativeName>
        <fullName>Complex III subunit III</fullName>
    </alternativeName>
    <alternativeName>
        <fullName>Cytochrome b-c1 complex subunit 3</fullName>
    </alternativeName>
    <alternativeName>
        <fullName>Ubiquinol-cytochrome-c reductase complex cytochrome b subunit</fullName>
    </alternativeName>
</protein>
<keyword id="KW-0249">Electron transport</keyword>
<keyword id="KW-0349">Heme</keyword>
<keyword id="KW-0408">Iron</keyword>
<keyword id="KW-0472">Membrane</keyword>
<keyword id="KW-0479">Metal-binding</keyword>
<keyword id="KW-0496">Mitochondrion</keyword>
<keyword id="KW-0999">Mitochondrion inner membrane</keyword>
<keyword id="KW-0679">Respiratory chain</keyword>
<keyword id="KW-0812">Transmembrane</keyword>
<keyword id="KW-1133">Transmembrane helix</keyword>
<keyword id="KW-0813">Transport</keyword>
<keyword id="KW-0830">Ubiquinone</keyword>
<comment type="function">
    <text evidence="2">Component of the ubiquinol-cytochrome c reductase complex (complex III or cytochrome b-c1 complex) that is part of the mitochondrial respiratory chain. The b-c1 complex mediates electron transfer from ubiquinol to cytochrome c. Contributes to the generation of a proton gradient across the mitochondrial membrane that is then used for ATP synthesis.</text>
</comment>
<comment type="cofactor">
    <cofactor evidence="2">
        <name>heme b</name>
        <dbReference type="ChEBI" id="CHEBI:60344"/>
    </cofactor>
    <text evidence="2">Binds 2 heme b groups non-covalently.</text>
</comment>
<comment type="subunit">
    <text evidence="2">The cytochrome bc1 complex contains 11 subunits: 3 respiratory subunits (MT-CYB, CYC1 and UQCRFS1), 2 core proteins (UQCRC1 and UQCRC2) and 6 low-molecular weight proteins (UQCRH/QCR6, UQCRB/QCR7, UQCRQ/QCR8, UQCR10/QCR9, UQCR11/QCR10 and a cleavage product of UQCRFS1). This cytochrome bc1 complex then forms a dimer.</text>
</comment>
<comment type="subcellular location">
    <subcellularLocation>
        <location evidence="2">Mitochondrion inner membrane</location>
        <topology evidence="2">Multi-pass membrane protein</topology>
    </subcellularLocation>
</comment>
<comment type="miscellaneous">
    <text evidence="1">Heme 1 (or BL or b562) is low-potential and absorbs at about 562 nm, and heme 2 (or BH or b566) is high-potential and absorbs at about 566 nm.</text>
</comment>
<comment type="similarity">
    <text evidence="3 4">Belongs to the cytochrome b family.</text>
</comment>
<comment type="caution">
    <text evidence="2">The full-length protein contains only eight transmembrane helices, not nine as predicted by bioinformatics tools.</text>
</comment>
<reference key="1">
    <citation type="journal article" date="1998" name="Mol. Phylogenet. Evol.">
        <title>The molecular phylogenetics of tuco-tucos (genus Ctenomys, Rodentia: Octodontidae) suggests an early burst of speciation.</title>
        <authorList>
            <person name="Lessa E.P."/>
            <person name="Cook J.A."/>
        </authorList>
    </citation>
    <scope>NUCLEOTIDE SEQUENCE [GENOMIC DNA]</scope>
    <source>
        <strain>Isolate NK 13029</strain>
        <strain>Isolate NK 13030</strain>
    </source>
</reference>
<feature type="chain" id="PRO_0000255020" description="Cytochrome b">
    <location>
        <begin position="1"/>
        <end position="379"/>
    </location>
</feature>
<feature type="transmembrane region" description="Helical" evidence="2">
    <location>
        <begin position="33"/>
        <end position="53"/>
    </location>
</feature>
<feature type="transmembrane region" description="Helical" evidence="2">
    <location>
        <begin position="77"/>
        <end position="98"/>
    </location>
</feature>
<feature type="transmembrane region" description="Helical" evidence="2">
    <location>
        <begin position="113"/>
        <end position="133"/>
    </location>
</feature>
<feature type="transmembrane region" description="Helical" evidence="2">
    <location>
        <begin position="178"/>
        <end position="198"/>
    </location>
</feature>
<feature type="transmembrane region" description="Helical" evidence="2">
    <location>
        <begin position="226"/>
        <end position="246"/>
    </location>
</feature>
<feature type="transmembrane region" description="Helical" evidence="2">
    <location>
        <begin position="288"/>
        <end position="308"/>
    </location>
</feature>
<feature type="transmembrane region" description="Helical" evidence="2">
    <location>
        <begin position="320"/>
        <end position="340"/>
    </location>
</feature>
<feature type="transmembrane region" description="Helical" evidence="2">
    <location>
        <begin position="347"/>
        <end position="367"/>
    </location>
</feature>
<feature type="binding site" description="axial binding residue" evidence="2">
    <location>
        <position position="83"/>
    </location>
    <ligand>
        <name>heme b</name>
        <dbReference type="ChEBI" id="CHEBI:60344"/>
        <label>b562</label>
    </ligand>
    <ligandPart>
        <name>Fe</name>
        <dbReference type="ChEBI" id="CHEBI:18248"/>
    </ligandPart>
</feature>
<feature type="binding site" description="axial binding residue" evidence="2">
    <location>
        <position position="97"/>
    </location>
    <ligand>
        <name>heme b</name>
        <dbReference type="ChEBI" id="CHEBI:60344"/>
        <label>b566</label>
    </ligand>
    <ligandPart>
        <name>Fe</name>
        <dbReference type="ChEBI" id="CHEBI:18248"/>
    </ligandPart>
</feature>
<feature type="binding site" description="axial binding residue" evidence="2">
    <location>
        <position position="182"/>
    </location>
    <ligand>
        <name>heme b</name>
        <dbReference type="ChEBI" id="CHEBI:60344"/>
        <label>b562</label>
    </ligand>
    <ligandPart>
        <name>Fe</name>
        <dbReference type="ChEBI" id="CHEBI:18248"/>
    </ligandPart>
</feature>
<feature type="binding site" description="axial binding residue" evidence="2">
    <location>
        <position position="196"/>
    </location>
    <ligand>
        <name>heme b</name>
        <dbReference type="ChEBI" id="CHEBI:60344"/>
        <label>b566</label>
    </ligand>
    <ligandPart>
        <name>Fe</name>
        <dbReference type="ChEBI" id="CHEBI:18248"/>
    </ligandPart>
</feature>
<feature type="binding site" evidence="2">
    <location>
        <position position="201"/>
    </location>
    <ligand>
        <name>a ubiquinone</name>
        <dbReference type="ChEBI" id="CHEBI:16389"/>
    </ligand>
</feature>
<feature type="sequence variant" description="In strain: Isolate NK 13030.">
    <original>A</original>
    <variation>T</variation>
    <location>
        <position position="23"/>
    </location>
</feature>
<feature type="sequence variant" description="In strain: Isolate NK 13030.">
    <original>V</original>
    <variation>M</variation>
    <location>
        <position position="39"/>
    </location>
</feature>
<feature type="sequence variant" description="In strain: Isolate NK 13030.">
    <original>M</original>
    <variation>I</variation>
    <location>
        <position position="156"/>
    </location>
</feature>
<feature type="sequence variant" description="In strain: Isolate NK 13030.">
    <original>C</original>
    <variation>S</variation>
    <location>
        <position position="209"/>
    </location>
</feature>
<feature type="sequence variant" description="In strain: Isolate NK 13030.">
    <original>V</original>
    <variation>I</variation>
    <location>
        <position position="338"/>
    </location>
</feature>
<feature type="sequence variant" description="In strain: Isolate NK 13030.">
    <original>H</original>
    <variation>Y</variation>
    <location>
        <position position="345"/>
    </location>
</feature>
<accession>O20540</accession>
<accession>O20541</accession>
<name>CYB_CTEGO</name>
<geneLocation type="mitochondrion"/>
<organism>
    <name type="scientific">Ctenomys goodfellowi</name>
    <name type="common">Goodfellow's tuco-tuco</name>
    <dbReference type="NCBI Taxonomy" id="61868"/>
    <lineage>
        <taxon>Eukaryota</taxon>
        <taxon>Metazoa</taxon>
        <taxon>Chordata</taxon>
        <taxon>Craniata</taxon>
        <taxon>Vertebrata</taxon>
        <taxon>Euteleostomi</taxon>
        <taxon>Mammalia</taxon>
        <taxon>Eutheria</taxon>
        <taxon>Euarchontoglires</taxon>
        <taxon>Glires</taxon>
        <taxon>Rodentia</taxon>
        <taxon>Hystricomorpha</taxon>
        <taxon>Ctenomyidae</taxon>
        <taxon>Ctenomys</taxon>
    </lineage>
</organism>
<dbReference type="EMBL" id="AF007050">
    <property type="protein sequence ID" value="AAB69209.1"/>
    <property type="molecule type" value="Genomic_DNA"/>
</dbReference>
<dbReference type="EMBL" id="AF007051">
    <property type="protein sequence ID" value="AAB69210.1"/>
    <property type="molecule type" value="Genomic_DNA"/>
</dbReference>
<dbReference type="SMR" id="O20540"/>
<dbReference type="GO" id="GO:0005743">
    <property type="term" value="C:mitochondrial inner membrane"/>
    <property type="evidence" value="ECO:0007669"/>
    <property type="project" value="UniProtKB-SubCell"/>
</dbReference>
<dbReference type="GO" id="GO:0045275">
    <property type="term" value="C:respiratory chain complex III"/>
    <property type="evidence" value="ECO:0007669"/>
    <property type="project" value="InterPro"/>
</dbReference>
<dbReference type="GO" id="GO:0046872">
    <property type="term" value="F:metal ion binding"/>
    <property type="evidence" value="ECO:0007669"/>
    <property type="project" value="UniProtKB-KW"/>
</dbReference>
<dbReference type="GO" id="GO:0008121">
    <property type="term" value="F:ubiquinol-cytochrome-c reductase activity"/>
    <property type="evidence" value="ECO:0007669"/>
    <property type="project" value="InterPro"/>
</dbReference>
<dbReference type="GO" id="GO:0006122">
    <property type="term" value="P:mitochondrial electron transport, ubiquinol to cytochrome c"/>
    <property type="evidence" value="ECO:0007669"/>
    <property type="project" value="TreeGrafter"/>
</dbReference>
<dbReference type="CDD" id="cd00290">
    <property type="entry name" value="cytochrome_b_C"/>
    <property type="match status" value="1"/>
</dbReference>
<dbReference type="CDD" id="cd00284">
    <property type="entry name" value="Cytochrome_b_N"/>
    <property type="match status" value="1"/>
</dbReference>
<dbReference type="FunFam" id="1.20.810.10:FF:000002">
    <property type="entry name" value="Cytochrome b"/>
    <property type="match status" value="1"/>
</dbReference>
<dbReference type="Gene3D" id="1.20.810.10">
    <property type="entry name" value="Cytochrome Bc1 Complex, Chain C"/>
    <property type="match status" value="1"/>
</dbReference>
<dbReference type="InterPro" id="IPR005798">
    <property type="entry name" value="Cyt_b/b6_C"/>
</dbReference>
<dbReference type="InterPro" id="IPR036150">
    <property type="entry name" value="Cyt_b/b6_C_sf"/>
</dbReference>
<dbReference type="InterPro" id="IPR005797">
    <property type="entry name" value="Cyt_b/b6_N"/>
</dbReference>
<dbReference type="InterPro" id="IPR027387">
    <property type="entry name" value="Cytb/b6-like_sf"/>
</dbReference>
<dbReference type="InterPro" id="IPR030689">
    <property type="entry name" value="Cytochrome_b"/>
</dbReference>
<dbReference type="InterPro" id="IPR048260">
    <property type="entry name" value="Cytochrome_b_C_euk/bac"/>
</dbReference>
<dbReference type="InterPro" id="IPR048259">
    <property type="entry name" value="Cytochrome_b_N_euk/bac"/>
</dbReference>
<dbReference type="InterPro" id="IPR016174">
    <property type="entry name" value="Di-haem_cyt_TM"/>
</dbReference>
<dbReference type="PANTHER" id="PTHR19271">
    <property type="entry name" value="CYTOCHROME B"/>
    <property type="match status" value="1"/>
</dbReference>
<dbReference type="PANTHER" id="PTHR19271:SF16">
    <property type="entry name" value="CYTOCHROME B"/>
    <property type="match status" value="1"/>
</dbReference>
<dbReference type="Pfam" id="PF00032">
    <property type="entry name" value="Cytochrom_B_C"/>
    <property type="match status" value="1"/>
</dbReference>
<dbReference type="Pfam" id="PF00033">
    <property type="entry name" value="Cytochrome_B"/>
    <property type="match status" value="1"/>
</dbReference>
<dbReference type="PIRSF" id="PIRSF038885">
    <property type="entry name" value="COB"/>
    <property type="match status" value="1"/>
</dbReference>
<dbReference type="SUPFAM" id="SSF81648">
    <property type="entry name" value="a domain/subunit of cytochrome bc1 complex (Ubiquinol-cytochrome c reductase)"/>
    <property type="match status" value="1"/>
</dbReference>
<dbReference type="SUPFAM" id="SSF81342">
    <property type="entry name" value="Transmembrane di-heme cytochromes"/>
    <property type="match status" value="1"/>
</dbReference>
<dbReference type="PROSITE" id="PS51003">
    <property type="entry name" value="CYTB_CTER"/>
    <property type="match status" value="1"/>
</dbReference>
<dbReference type="PROSITE" id="PS51002">
    <property type="entry name" value="CYTB_NTER"/>
    <property type="match status" value="1"/>
</dbReference>
<sequence>MTNMRKSHPLIKIVNHSFIDLPAPSNISAWWNFGSLLGVCLGLQILTGLFLAMHYTADTTTAFSSVTHICRDVNYGWLIRYMHANGASMFFIFLYFHIGRGIYYGSYTFMDTWNIGTLLLLAVMATAFMGYVLPWGQMSFWGATVITNLLSAIPYMGPTLVEWIWGGFSVDKATLTRFFAFHFILPFIITAMVMIHLLFLHETGSNNPCGMNSDSDKIPFHPYYTIKDILGVLLMMITLMSLVMFTPDLLGDPDNYTPANPLNTPPHIKPEWYFLFAYAILRSIPNKLGGVLALTFSILILMLFPILHSSKQRSMSFRPLSQCLMWILVANLLILTWVGGQPVEHPFITIGQLASMTYFFTILILMPSTALMENKLLKW</sequence>
<gene>
    <name type="primary">MT-CYB</name>
    <name type="synonym">COB</name>
    <name type="synonym">CYTB</name>
    <name type="synonym">MTCYB</name>
</gene>
<evidence type="ECO:0000250" key="1"/>
<evidence type="ECO:0000250" key="2">
    <source>
        <dbReference type="UniProtKB" id="P00157"/>
    </source>
</evidence>
<evidence type="ECO:0000255" key="3">
    <source>
        <dbReference type="PROSITE-ProRule" id="PRU00967"/>
    </source>
</evidence>
<evidence type="ECO:0000255" key="4">
    <source>
        <dbReference type="PROSITE-ProRule" id="PRU00968"/>
    </source>
</evidence>
<proteinExistence type="inferred from homology"/>